<evidence type="ECO:0000255" key="1">
    <source>
        <dbReference type="HAMAP-Rule" id="MF_01367"/>
    </source>
</evidence>
<evidence type="ECO:0000305" key="2"/>
<protein>
    <recommendedName>
        <fullName evidence="1">Large ribosomal subunit protein uL14</fullName>
    </recommendedName>
    <alternativeName>
        <fullName evidence="2">50S ribosomal protein L14</fullName>
    </alternativeName>
</protein>
<name>RL14_METCA</name>
<accession>Q605C2</accession>
<keyword id="KW-1185">Reference proteome</keyword>
<keyword id="KW-0687">Ribonucleoprotein</keyword>
<keyword id="KW-0689">Ribosomal protein</keyword>
<keyword id="KW-0694">RNA-binding</keyword>
<keyword id="KW-0699">rRNA-binding</keyword>
<dbReference type="EMBL" id="AE017282">
    <property type="protein sequence ID" value="AAU91473.1"/>
    <property type="molecule type" value="Genomic_DNA"/>
</dbReference>
<dbReference type="RefSeq" id="WP_010961590.1">
    <property type="nucleotide sequence ID" value="NC_002977.6"/>
</dbReference>
<dbReference type="SMR" id="Q605C2"/>
<dbReference type="STRING" id="243233.MCA2362"/>
<dbReference type="GeneID" id="88224564"/>
<dbReference type="KEGG" id="mca:MCA2362"/>
<dbReference type="eggNOG" id="COG0093">
    <property type="taxonomic scope" value="Bacteria"/>
</dbReference>
<dbReference type="HOGENOM" id="CLU_095071_2_1_6"/>
<dbReference type="Proteomes" id="UP000006821">
    <property type="component" value="Chromosome"/>
</dbReference>
<dbReference type="GO" id="GO:0022625">
    <property type="term" value="C:cytosolic large ribosomal subunit"/>
    <property type="evidence" value="ECO:0007669"/>
    <property type="project" value="TreeGrafter"/>
</dbReference>
<dbReference type="GO" id="GO:0070180">
    <property type="term" value="F:large ribosomal subunit rRNA binding"/>
    <property type="evidence" value="ECO:0007669"/>
    <property type="project" value="TreeGrafter"/>
</dbReference>
<dbReference type="GO" id="GO:0003735">
    <property type="term" value="F:structural constituent of ribosome"/>
    <property type="evidence" value="ECO:0007669"/>
    <property type="project" value="InterPro"/>
</dbReference>
<dbReference type="GO" id="GO:0006412">
    <property type="term" value="P:translation"/>
    <property type="evidence" value="ECO:0007669"/>
    <property type="project" value="UniProtKB-UniRule"/>
</dbReference>
<dbReference type="CDD" id="cd00337">
    <property type="entry name" value="Ribosomal_uL14"/>
    <property type="match status" value="1"/>
</dbReference>
<dbReference type="FunFam" id="2.40.150.20:FF:000001">
    <property type="entry name" value="50S ribosomal protein L14"/>
    <property type="match status" value="1"/>
</dbReference>
<dbReference type="Gene3D" id="2.40.150.20">
    <property type="entry name" value="Ribosomal protein L14"/>
    <property type="match status" value="1"/>
</dbReference>
<dbReference type="HAMAP" id="MF_01367">
    <property type="entry name" value="Ribosomal_uL14"/>
    <property type="match status" value="1"/>
</dbReference>
<dbReference type="InterPro" id="IPR000218">
    <property type="entry name" value="Ribosomal_uL14"/>
</dbReference>
<dbReference type="InterPro" id="IPR005745">
    <property type="entry name" value="Ribosomal_uL14_bac-type"/>
</dbReference>
<dbReference type="InterPro" id="IPR019972">
    <property type="entry name" value="Ribosomal_uL14_CS"/>
</dbReference>
<dbReference type="InterPro" id="IPR036853">
    <property type="entry name" value="Ribosomal_uL14_sf"/>
</dbReference>
<dbReference type="NCBIfam" id="TIGR01067">
    <property type="entry name" value="rplN_bact"/>
    <property type="match status" value="1"/>
</dbReference>
<dbReference type="PANTHER" id="PTHR11761">
    <property type="entry name" value="50S/60S RIBOSOMAL PROTEIN L14/L23"/>
    <property type="match status" value="1"/>
</dbReference>
<dbReference type="PANTHER" id="PTHR11761:SF3">
    <property type="entry name" value="LARGE RIBOSOMAL SUBUNIT PROTEIN UL14M"/>
    <property type="match status" value="1"/>
</dbReference>
<dbReference type="Pfam" id="PF00238">
    <property type="entry name" value="Ribosomal_L14"/>
    <property type="match status" value="1"/>
</dbReference>
<dbReference type="SMART" id="SM01374">
    <property type="entry name" value="Ribosomal_L14"/>
    <property type="match status" value="1"/>
</dbReference>
<dbReference type="SUPFAM" id="SSF50193">
    <property type="entry name" value="Ribosomal protein L14"/>
    <property type="match status" value="1"/>
</dbReference>
<dbReference type="PROSITE" id="PS00049">
    <property type="entry name" value="RIBOSOMAL_L14"/>
    <property type="match status" value="1"/>
</dbReference>
<reference key="1">
    <citation type="journal article" date="2004" name="PLoS Biol.">
        <title>Genomic insights into methanotrophy: the complete genome sequence of Methylococcus capsulatus (Bath).</title>
        <authorList>
            <person name="Ward N.L."/>
            <person name="Larsen O."/>
            <person name="Sakwa J."/>
            <person name="Bruseth L."/>
            <person name="Khouri H.M."/>
            <person name="Durkin A.S."/>
            <person name="Dimitrov G."/>
            <person name="Jiang L."/>
            <person name="Scanlan D."/>
            <person name="Kang K.H."/>
            <person name="Lewis M.R."/>
            <person name="Nelson K.E."/>
            <person name="Methe B.A."/>
            <person name="Wu M."/>
            <person name="Heidelberg J.F."/>
            <person name="Paulsen I.T."/>
            <person name="Fouts D.E."/>
            <person name="Ravel J."/>
            <person name="Tettelin H."/>
            <person name="Ren Q."/>
            <person name="Read T.D."/>
            <person name="DeBoy R.T."/>
            <person name="Seshadri R."/>
            <person name="Salzberg S.L."/>
            <person name="Jensen H.B."/>
            <person name="Birkeland N.K."/>
            <person name="Nelson W.C."/>
            <person name="Dodson R.J."/>
            <person name="Grindhaug S.H."/>
            <person name="Holt I.E."/>
            <person name="Eidhammer I."/>
            <person name="Jonasen I."/>
            <person name="Vanaken S."/>
            <person name="Utterback T.R."/>
            <person name="Feldblyum T.V."/>
            <person name="Fraser C.M."/>
            <person name="Lillehaug J.R."/>
            <person name="Eisen J.A."/>
        </authorList>
    </citation>
    <scope>NUCLEOTIDE SEQUENCE [LARGE SCALE GENOMIC DNA]</scope>
    <source>
        <strain>ATCC 33009 / NCIMB 11132 / Bath</strain>
    </source>
</reference>
<sequence length="122" mass="13534">MIQMQTCLDVADNSGARQVMCIKVLGGSKRRYANVGDIIKVSVKDAIPRGRVKKGEVYNAVVVRTRKGVRRADGSLIRFDNNAAVILNNQHQPIGTRIFGPVTRELRSEKFMKIISLAPEVL</sequence>
<comment type="function">
    <text evidence="1">Binds to 23S rRNA. Forms part of two intersubunit bridges in the 70S ribosome.</text>
</comment>
<comment type="subunit">
    <text evidence="1">Part of the 50S ribosomal subunit. Forms a cluster with proteins L3 and L19. In the 70S ribosome, L14 and L19 interact and together make contacts with the 16S rRNA in bridges B5 and B8.</text>
</comment>
<comment type="similarity">
    <text evidence="1">Belongs to the universal ribosomal protein uL14 family.</text>
</comment>
<feature type="chain" id="PRO_0000266505" description="Large ribosomal subunit protein uL14">
    <location>
        <begin position="1"/>
        <end position="122"/>
    </location>
</feature>
<gene>
    <name evidence="1" type="primary">rplN</name>
    <name type="ordered locus">MCA2362</name>
</gene>
<proteinExistence type="inferred from homology"/>
<organism>
    <name type="scientific">Methylococcus capsulatus (strain ATCC 33009 / NCIMB 11132 / Bath)</name>
    <dbReference type="NCBI Taxonomy" id="243233"/>
    <lineage>
        <taxon>Bacteria</taxon>
        <taxon>Pseudomonadati</taxon>
        <taxon>Pseudomonadota</taxon>
        <taxon>Gammaproteobacteria</taxon>
        <taxon>Methylococcales</taxon>
        <taxon>Methylococcaceae</taxon>
        <taxon>Methylococcus</taxon>
    </lineage>
</organism>